<gene>
    <name type="ordered locus">YCL046W</name>
    <name type="ORF">YCL46W</name>
</gene>
<organism>
    <name type="scientific">Saccharomyces cerevisiae (strain ATCC 204508 / S288c)</name>
    <name type="common">Baker's yeast</name>
    <dbReference type="NCBI Taxonomy" id="559292"/>
    <lineage>
        <taxon>Eukaryota</taxon>
        <taxon>Fungi</taxon>
        <taxon>Dikarya</taxon>
        <taxon>Ascomycota</taxon>
        <taxon>Saccharomycotina</taxon>
        <taxon>Saccharomycetes</taxon>
        <taxon>Saccharomycetales</taxon>
        <taxon>Saccharomycetaceae</taxon>
        <taxon>Saccharomyces</taxon>
    </lineage>
</organism>
<sequence>MVKGKTFLKRICPEETLNEETKQEVSVGFDKMRTLLRSRESGMTFSQGPKLASCQSVINASSEKTAWTQLVFRKSKMKTYTKSVHVIFIAMGEGEDESVDMNVGISY</sequence>
<accession>P25575</accession>
<reference key="1">
    <citation type="journal article" date="1992" name="Nature">
        <title>The complete DNA sequence of yeast chromosome III.</title>
        <authorList>
            <person name="Oliver S.G."/>
            <person name="van der Aart Q.J.M."/>
            <person name="Agostoni-Carbone M.L."/>
            <person name="Aigle M."/>
            <person name="Alberghina L."/>
            <person name="Alexandraki D."/>
            <person name="Antoine G."/>
            <person name="Anwar R."/>
            <person name="Ballesta J.P.G."/>
            <person name="Benit P."/>
            <person name="Berben G."/>
            <person name="Bergantino E."/>
            <person name="Biteau N."/>
            <person name="Bolle P.-A."/>
            <person name="Bolotin-Fukuhara M."/>
            <person name="Brown A."/>
            <person name="Brown A.J.P."/>
            <person name="Buhler J.-M."/>
            <person name="Carcano C."/>
            <person name="Carignani G."/>
            <person name="Cederberg H."/>
            <person name="Chanet R."/>
            <person name="Contreras R."/>
            <person name="Crouzet M."/>
            <person name="Daignan-Fornier B."/>
            <person name="Defoor E."/>
            <person name="Delgado M.D."/>
            <person name="Demolder J."/>
            <person name="Doira C."/>
            <person name="Dubois E."/>
            <person name="Dujon B."/>
            <person name="Duesterhoeft A."/>
            <person name="Erdmann D."/>
            <person name="Esteban M."/>
            <person name="Fabre F."/>
            <person name="Fairhead C."/>
            <person name="Faye G."/>
            <person name="Feldmann H."/>
            <person name="Fiers W."/>
            <person name="Francingues-Gaillard M.-C."/>
            <person name="Franco L."/>
            <person name="Frontali L."/>
            <person name="Fukuhara H."/>
            <person name="Fuller L.J."/>
            <person name="Galland P."/>
            <person name="Gent M.E."/>
            <person name="Gigot D."/>
            <person name="Gilliquet V."/>
            <person name="Glansdorff N."/>
            <person name="Goffeau A."/>
            <person name="Grenson M."/>
            <person name="Grisanti P."/>
            <person name="Grivell L.A."/>
            <person name="de Haan M."/>
            <person name="Haasemann M."/>
            <person name="Hatat D."/>
            <person name="Hoenicka J."/>
            <person name="Hegemann J.H."/>
            <person name="Herbert C.J."/>
            <person name="Hilger F."/>
            <person name="Hohmann S."/>
            <person name="Hollenberg C.P."/>
            <person name="Huse K."/>
            <person name="Iborra F."/>
            <person name="Indge K.J."/>
            <person name="Isono K."/>
            <person name="Jacq C."/>
            <person name="Jacquet M."/>
            <person name="James C.M."/>
            <person name="Jauniaux J.-C."/>
            <person name="Jia Y."/>
            <person name="Jimenez A."/>
            <person name="Kelly A."/>
            <person name="Kleinhans U."/>
            <person name="Kreisl P."/>
            <person name="Lanfranchi G."/>
            <person name="Lewis C."/>
            <person name="van der Linden C.G."/>
            <person name="Lucchini G."/>
            <person name="Lutzenkirchen K."/>
            <person name="Maat M.J."/>
            <person name="Mallet L."/>
            <person name="Mannhaupt G."/>
            <person name="Martegani E."/>
            <person name="Mathieu A."/>
            <person name="Maurer C.T.C."/>
            <person name="McConnell D."/>
            <person name="McKee R.A."/>
            <person name="Messenguy F."/>
            <person name="Mewes H.-W."/>
            <person name="Molemans F."/>
            <person name="Montague M.A."/>
            <person name="Muzi Falconi M."/>
            <person name="Navas L."/>
            <person name="Newlon C.S."/>
            <person name="Noone D."/>
            <person name="Pallier C."/>
            <person name="Panzeri L."/>
            <person name="Pearson B.M."/>
            <person name="Perea J."/>
            <person name="Philippsen P."/>
            <person name="Pierard A."/>
            <person name="Planta R.J."/>
            <person name="Plevani P."/>
            <person name="Poetsch B."/>
            <person name="Pohl F.M."/>
            <person name="Purnelle B."/>
            <person name="Ramezani Rad M."/>
            <person name="Rasmussen S.W."/>
            <person name="Raynal A."/>
            <person name="Remacha M.A."/>
            <person name="Richterich P."/>
            <person name="Roberts A.B."/>
            <person name="Rodriguez F."/>
            <person name="Sanz E."/>
            <person name="Schaaff-Gerstenschlaeger I."/>
            <person name="Scherens B."/>
            <person name="Schweitzer B."/>
            <person name="Shu Y."/>
            <person name="Skala J."/>
            <person name="Slonimski P.P."/>
            <person name="Sor F."/>
            <person name="Soustelle C."/>
            <person name="Spiegelberg R."/>
            <person name="Stateva L.I."/>
            <person name="Steensma H.Y."/>
            <person name="Steiner S."/>
            <person name="Thierry A."/>
            <person name="Thireos G."/>
            <person name="Tzermia M."/>
            <person name="Urrestarazu L.A."/>
            <person name="Valle G."/>
            <person name="Vetter I."/>
            <person name="van Vliet-Reedijk J.C."/>
            <person name="Voet M."/>
            <person name="Volckaert G."/>
            <person name="Vreken P."/>
            <person name="Wang H."/>
            <person name="Warmington J.R."/>
            <person name="von Wettstein D."/>
            <person name="Wicksteed B.L."/>
            <person name="Wilson C."/>
            <person name="Wurst H."/>
            <person name="Xu G."/>
            <person name="Yoshikawa A."/>
            <person name="Zimmermann F.K."/>
            <person name="Sgouros J.G."/>
        </authorList>
    </citation>
    <scope>NUCLEOTIDE SEQUENCE [LARGE SCALE GENOMIC DNA]</scope>
    <source>
        <strain>ATCC 204508 / S288c</strain>
    </source>
</reference>
<reference key="2">
    <citation type="journal article" date="2014" name="G3 (Bethesda)">
        <title>The reference genome sequence of Saccharomyces cerevisiae: Then and now.</title>
        <authorList>
            <person name="Engel S.R."/>
            <person name="Dietrich F.S."/>
            <person name="Fisk D.G."/>
            <person name="Binkley G."/>
            <person name="Balakrishnan R."/>
            <person name="Costanzo M.C."/>
            <person name="Dwight S.S."/>
            <person name="Hitz B.C."/>
            <person name="Karra K."/>
            <person name="Nash R.S."/>
            <person name="Weng S."/>
            <person name="Wong E.D."/>
            <person name="Lloyd P."/>
            <person name="Skrzypek M.S."/>
            <person name="Miyasato S.R."/>
            <person name="Simison M."/>
            <person name="Cherry J.M."/>
        </authorList>
    </citation>
    <scope>GENOME REANNOTATION</scope>
    <source>
        <strain>ATCC 204508 / S288c</strain>
    </source>
</reference>
<reference key="3">
    <citation type="journal article" date="2007" name="Genome Res.">
        <title>Approaching a complete repository of sequence-verified protein-encoding clones for Saccharomyces cerevisiae.</title>
        <authorList>
            <person name="Hu Y."/>
            <person name="Rolfs A."/>
            <person name="Bhullar B."/>
            <person name="Murthy T.V.S."/>
            <person name="Zhu C."/>
            <person name="Berger M.F."/>
            <person name="Camargo A.A."/>
            <person name="Kelley F."/>
            <person name="McCarron S."/>
            <person name="Jepson D."/>
            <person name="Richardson A."/>
            <person name="Raphael J."/>
            <person name="Moreira D."/>
            <person name="Taycher E."/>
            <person name="Zuo D."/>
            <person name="Mohr S."/>
            <person name="Kane M.F."/>
            <person name="Williamson J."/>
            <person name="Simpson A.J.G."/>
            <person name="Bulyk M.L."/>
            <person name="Harlow E."/>
            <person name="Marsischky G."/>
            <person name="Kolodner R.D."/>
            <person name="LaBaer J."/>
        </authorList>
    </citation>
    <scope>NUCLEOTIDE SEQUENCE [GENOMIC DNA]</scope>
    <source>
        <strain>ATCC 204508 / S288c</strain>
    </source>
</reference>
<dbReference type="EMBL" id="X59720">
    <property type="protein sequence ID" value="CAA42371.1"/>
    <property type="molecule type" value="Genomic_DNA"/>
</dbReference>
<dbReference type="EMBL" id="AY693316">
    <property type="protein sequence ID" value="AAT93335.1"/>
    <property type="molecule type" value="Genomic_DNA"/>
</dbReference>
<dbReference type="PIR" id="S19375">
    <property type="entry name" value="S19375"/>
</dbReference>
<dbReference type="DIP" id="DIP-1780N"/>
<dbReference type="IntAct" id="P25575">
    <property type="interactions" value="3"/>
</dbReference>
<dbReference type="MINT" id="P25575"/>
<dbReference type="STRING" id="4932.YCL046W"/>
<dbReference type="iPTMnet" id="P25575"/>
<dbReference type="PaxDb" id="4932-YCL046W"/>
<dbReference type="EnsemblFungi" id="YCL046W_mRNA">
    <property type="protein sequence ID" value="YCL046W"/>
    <property type="gene ID" value="YCL046W"/>
</dbReference>
<dbReference type="AGR" id="SGD:S000000551"/>
<dbReference type="SGD" id="S000000551">
    <property type="gene designation" value="YCL046W"/>
</dbReference>
<dbReference type="HOGENOM" id="CLU_2212013_0_0_1"/>
<evidence type="ECO:0000305" key="1"/>
<evidence type="ECO:0000305" key="2">
    <source>
    </source>
</evidence>
<feature type="chain" id="PRO_0000202548" description="Putative uncharacterized protein YCL046W">
    <location>
        <begin position="1"/>
        <end position="107"/>
    </location>
</feature>
<comment type="interaction">
    <interactant intactId="EBI-21748">
        <id>P25575</id>
    </interactant>
    <interactant intactId="EBI-17537">
        <id>P12904</id>
        <label>SNF4</label>
    </interactant>
    <organismsDiffer>false</organismsDiffer>
    <experiments>3</experiments>
</comment>
<comment type="miscellaneous">
    <text evidence="1">Partially overlaps YCL045C.</text>
</comment>
<comment type="caution">
    <text evidence="2">Product of a dubious gene prediction unlikely to encode a functional protein. Because of that it is not part of the S.cerevisiae S288c complete/reference proteome set.</text>
</comment>
<proteinExistence type="uncertain"/>
<protein>
    <recommendedName>
        <fullName>Putative uncharacterized protein YCL046W</fullName>
    </recommendedName>
</protein>
<name>YCE6_YEAST</name>